<keyword id="KW-0030">Aminoacyl-tRNA synthetase</keyword>
<keyword id="KW-0067">ATP-binding</keyword>
<keyword id="KW-0963">Cytoplasm</keyword>
<keyword id="KW-0436">Ligase</keyword>
<keyword id="KW-0479">Metal-binding</keyword>
<keyword id="KW-0547">Nucleotide-binding</keyword>
<keyword id="KW-0648">Protein biosynthesis</keyword>
<keyword id="KW-1185">Reference proteome</keyword>
<keyword id="KW-0862">Zinc</keyword>
<protein>
    <recommendedName>
        <fullName evidence="1">Cysteine--tRNA ligase</fullName>
        <ecNumber evidence="1">6.1.1.16</ecNumber>
    </recommendedName>
    <alternativeName>
        <fullName evidence="1">Cysteinyl-tRNA synthetase</fullName>
        <shortName evidence="1">CysRS</shortName>
    </alternativeName>
</protein>
<gene>
    <name evidence="1" type="primary">cysS</name>
    <name type="ordered locus">SAR11_1148</name>
</gene>
<sequence length="453" mass="52328">MNKDIFLTNNLNNKKEKFVPINKENIGMYVCGPTVYDNPHIGNARPLVIFDILFKVLKSKYGHDKINYIRNITDVDDKIIKSAKEKNLSISELTNNVIKDFNDDCNYLNLDNPSQQPKATDHIDLMIKMISTLIEKDFAYVVNDHVYFEVSKFDDYGKLSNKKLEDLIAGSRVEVSDNKKKSEDFVLWKPSKDDEPSWDSPWGKGRPGWHLECSAMSKKYLGNVFDIHGGGIDLIFPHHENEIAQSRCANDSKVFANYWIHNAFITMSNEKMAKSTGNILKIKDFKDNVDGQVLKLALMSAHYKQPLDWNEKLLEDCKNTIDKWYEVYLPPKDKIVLDEDILSPLYDDLNTPGYIAKLHQLYDKALKGGNEEKSLFVLACNFIGILNKTKEEWIEFKKKKSSINEDDILEMISLRNKAREDKNYKEADIIRNKLLDKGVLIEDKDGKTIWKLK</sequence>
<organism>
    <name type="scientific">Pelagibacter ubique (strain HTCC1062)</name>
    <dbReference type="NCBI Taxonomy" id="335992"/>
    <lineage>
        <taxon>Bacteria</taxon>
        <taxon>Pseudomonadati</taxon>
        <taxon>Pseudomonadota</taxon>
        <taxon>Alphaproteobacteria</taxon>
        <taxon>Candidatus Pelagibacterales</taxon>
        <taxon>Candidatus Pelagibacteraceae</taxon>
        <taxon>Candidatus Pelagibacter</taxon>
    </lineage>
</organism>
<name>SYC_PELUB</name>
<evidence type="ECO:0000255" key="1">
    <source>
        <dbReference type="HAMAP-Rule" id="MF_00041"/>
    </source>
</evidence>
<dbReference type="EC" id="6.1.1.16" evidence="1"/>
<dbReference type="EMBL" id="CP000084">
    <property type="protein sequence ID" value="AAZ21951.1"/>
    <property type="molecule type" value="Genomic_DNA"/>
</dbReference>
<dbReference type="RefSeq" id="WP_011282165.1">
    <property type="nucleotide sequence ID" value="NC_007205.1"/>
</dbReference>
<dbReference type="SMR" id="Q4FLI7"/>
<dbReference type="STRING" id="335992.SAR11_1148"/>
<dbReference type="GeneID" id="66295642"/>
<dbReference type="KEGG" id="pub:SAR11_1148"/>
<dbReference type="eggNOG" id="COG0215">
    <property type="taxonomic scope" value="Bacteria"/>
</dbReference>
<dbReference type="HOGENOM" id="CLU_013528_0_1_5"/>
<dbReference type="OrthoDB" id="9815130at2"/>
<dbReference type="Proteomes" id="UP000002528">
    <property type="component" value="Chromosome"/>
</dbReference>
<dbReference type="GO" id="GO:0005829">
    <property type="term" value="C:cytosol"/>
    <property type="evidence" value="ECO:0007669"/>
    <property type="project" value="TreeGrafter"/>
</dbReference>
<dbReference type="GO" id="GO:0005524">
    <property type="term" value="F:ATP binding"/>
    <property type="evidence" value="ECO:0007669"/>
    <property type="project" value="UniProtKB-UniRule"/>
</dbReference>
<dbReference type="GO" id="GO:0004817">
    <property type="term" value="F:cysteine-tRNA ligase activity"/>
    <property type="evidence" value="ECO:0007669"/>
    <property type="project" value="UniProtKB-UniRule"/>
</dbReference>
<dbReference type="GO" id="GO:0008270">
    <property type="term" value="F:zinc ion binding"/>
    <property type="evidence" value="ECO:0007669"/>
    <property type="project" value="UniProtKB-UniRule"/>
</dbReference>
<dbReference type="GO" id="GO:0006423">
    <property type="term" value="P:cysteinyl-tRNA aminoacylation"/>
    <property type="evidence" value="ECO:0007669"/>
    <property type="project" value="UniProtKB-UniRule"/>
</dbReference>
<dbReference type="CDD" id="cd00672">
    <property type="entry name" value="CysRS_core"/>
    <property type="match status" value="1"/>
</dbReference>
<dbReference type="FunFam" id="3.40.50.620:FF:000068">
    <property type="entry name" value="Cysteine--tRNA ligase"/>
    <property type="match status" value="1"/>
</dbReference>
<dbReference type="Gene3D" id="1.20.120.1910">
    <property type="entry name" value="Cysteine-tRNA ligase, C-terminal anti-codon recognition domain"/>
    <property type="match status" value="1"/>
</dbReference>
<dbReference type="Gene3D" id="3.40.50.620">
    <property type="entry name" value="HUPs"/>
    <property type="match status" value="1"/>
</dbReference>
<dbReference type="HAMAP" id="MF_00041">
    <property type="entry name" value="Cys_tRNA_synth"/>
    <property type="match status" value="1"/>
</dbReference>
<dbReference type="InterPro" id="IPR015803">
    <property type="entry name" value="Cys-tRNA-ligase"/>
</dbReference>
<dbReference type="InterPro" id="IPR024909">
    <property type="entry name" value="Cys-tRNA/MSH_ligase"/>
</dbReference>
<dbReference type="InterPro" id="IPR014729">
    <property type="entry name" value="Rossmann-like_a/b/a_fold"/>
</dbReference>
<dbReference type="InterPro" id="IPR032678">
    <property type="entry name" value="tRNA-synt_1_cat_dom"/>
</dbReference>
<dbReference type="InterPro" id="IPR009080">
    <property type="entry name" value="tRNAsynth_Ia_anticodon-bd"/>
</dbReference>
<dbReference type="NCBIfam" id="TIGR00435">
    <property type="entry name" value="cysS"/>
    <property type="match status" value="1"/>
</dbReference>
<dbReference type="PANTHER" id="PTHR10890:SF3">
    <property type="entry name" value="CYSTEINE--TRNA LIGASE, CYTOPLASMIC"/>
    <property type="match status" value="1"/>
</dbReference>
<dbReference type="PANTHER" id="PTHR10890">
    <property type="entry name" value="CYSTEINYL-TRNA SYNTHETASE"/>
    <property type="match status" value="1"/>
</dbReference>
<dbReference type="Pfam" id="PF01406">
    <property type="entry name" value="tRNA-synt_1e"/>
    <property type="match status" value="1"/>
</dbReference>
<dbReference type="PRINTS" id="PR00983">
    <property type="entry name" value="TRNASYNTHCYS"/>
</dbReference>
<dbReference type="SUPFAM" id="SSF47323">
    <property type="entry name" value="Anticodon-binding domain of a subclass of class I aminoacyl-tRNA synthetases"/>
    <property type="match status" value="1"/>
</dbReference>
<dbReference type="SUPFAM" id="SSF52374">
    <property type="entry name" value="Nucleotidylyl transferase"/>
    <property type="match status" value="1"/>
</dbReference>
<proteinExistence type="inferred from homology"/>
<comment type="catalytic activity">
    <reaction evidence="1">
        <text>tRNA(Cys) + L-cysteine + ATP = L-cysteinyl-tRNA(Cys) + AMP + diphosphate</text>
        <dbReference type="Rhea" id="RHEA:17773"/>
        <dbReference type="Rhea" id="RHEA-COMP:9661"/>
        <dbReference type="Rhea" id="RHEA-COMP:9679"/>
        <dbReference type="ChEBI" id="CHEBI:30616"/>
        <dbReference type="ChEBI" id="CHEBI:33019"/>
        <dbReference type="ChEBI" id="CHEBI:35235"/>
        <dbReference type="ChEBI" id="CHEBI:78442"/>
        <dbReference type="ChEBI" id="CHEBI:78517"/>
        <dbReference type="ChEBI" id="CHEBI:456215"/>
        <dbReference type="EC" id="6.1.1.16"/>
    </reaction>
</comment>
<comment type="cofactor">
    <cofactor evidence="1">
        <name>Zn(2+)</name>
        <dbReference type="ChEBI" id="CHEBI:29105"/>
    </cofactor>
    <text evidence="1">Binds 1 zinc ion per subunit.</text>
</comment>
<comment type="subunit">
    <text evidence="1">Monomer.</text>
</comment>
<comment type="subcellular location">
    <subcellularLocation>
        <location evidence="1">Cytoplasm</location>
    </subcellularLocation>
</comment>
<comment type="similarity">
    <text evidence="1">Belongs to the class-I aminoacyl-tRNA synthetase family.</text>
</comment>
<reference key="1">
    <citation type="journal article" date="2005" name="Science">
        <title>Genome streamlining in a cosmopolitan oceanic bacterium.</title>
        <authorList>
            <person name="Giovannoni S.J."/>
            <person name="Tripp H.J."/>
            <person name="Givan S."/>
            <person name="Podar M."/>
            <person name="Vergin K.L."/>
            <person name="Baptista D."/>
            <person name="Bibbs L."/>
            <person name="Eads J."/>
            <person name="Richardson T.H."/>
            <person name="Noordewier M."/>
            <person name="Rappe M.S."/>
            <person name="Short J.M."/>
            <person name="Carrington J.C."/>
            <person name="Mathur E.J."/>
        </authorList>
    </citation>
    <scope>NUCLEOTIDE SEQUENCE [LARGE SCALE GENOMIC DNA]</scope>
    <source>
        <strain>HTCC1062</strain>
    </source>
</reference>
<feature type="chain" id="PRO_0000240930" description="Cysteine--tRNA ligase">
    <location>
        <begin position="1"/>
        <end position="453"/>
    </location>
</feature>
<feature type="short sequence motif" description="'HIGH' region">
    <location>
        <begin position="33"/>
        <end position="43"/>
    </location>
</feature>
<feature type="short sequence motif" description="'KMSKS' region">
    <location>
        <begin position="271"/>
        <end position="275"/>
    </location>
</feature>
<feature type="binding site" evidence="1">
    <location>
        <position position="31"/>
    </location>
    <ligand>
        <name>Zn(2+)</name>
        <dbReference type="ChEBI" id="CHEBI:29105"/>
    </ligand>
</feature>
<feature type="binding site" evidence="1">
    <location>
        <position position="213"/>
    </location>
    <ligand>
        <name>Zn(2+)</name>
        <dbReference type="ChEBI" id="CHEBI:29105"/>
    </ligand>
</feature>
<feature type="binding site" evidence="1">
    <location>
        <position position="238"/>
    </location>
    <ligand>
        <name>Zn(2+)</name>
        <dbReference type="ChEBI" id="CHEBI:29105"/>
    </ligand>
</feature>
<feature type="binding site" evidence="1">
    <location>
        <position position="242"/>
    </location>
    <ligand>
        <name>Zn(2+)</name>
        <dbReference type="ChEBI" id="CHEBI:29105"/>
    </ligand>
</feature>
<feature type="binding site" evidence="1">
    <location>
        <position position="274"/>
    </location>
    <ligand>
        <name>ATP</name>
        <dbReference type="ChEBI" id="CHEBI:30616"/>
    </ligand>
</feature>
<accession>Q4FLI7</accession>